<proteinExistence type="evidence at transcript level"/>
<keyword id="KW-1003">Cell membrane</keyword>
<keyword id="KW-1015">Disulfide bond</keyword>
<keyword id="KW-0297">G-protein coupled receptor</keyword>
<keyword id="KW-0472">Membrane</keyword>
<keyword id="KW-0675">Receptor</keyword>
<keyword id="KW-1185">Reference proteome</keyword>
<keyword id="KW-0807">Transducer</keyword>
<keyword id="KW-0812">Transmembrane</keyword>
<keyword id="KW-1133">Transmembrane helix</keyword>
<protein>
    <recommendedName>
        <fullName>Melatonin-related receptor</fullName>
    </recommendedName>
    <alternativeName>
        <fullName>G protein-coupled receptor 50</fullName>
    </alternativeName>
    <alternativeName>
        <fullName>H9</fullName>
    </alternativeName>
</protein>
<evidence type="ECO:0000250" key="1">
    <source>
        <dbReference type="UniProtKB" id="O88495"/>
    </source>
</evidence>
<evidence type="ECO:0000250" key="2">
    <source>
        <dbReference type="UniProtKB" id="Q13585"/>
    </source>
</evidence>
<evidence type="ECO:0000255" key="3"/>
<evidence type="ECO:0000255" key="4">
    <source>
        <dbReference type="PROSITE-ProRule" id="PRU00521"/>
    </source>
</evidence>
<evidence type="ECO:0000256" key="5">
    <source>
        <dbReference type="SAM" id="MobiDB-lite"/>
    </source>
</evidence>
<evidence type="ECO:0000305" key="6"/>
<comment type="function">
    <text evidence="1 2">G protein-coupled receptor that plays a role in numerous physiological processes including regulation of energy metabolism, neurite outgrowth or cell migration (By similarity). Promotes self-renewal and neuronal differentiation of neural progenitor cells through activation of the NOTCH and WNT/beta-catenin signaling pathways (By similarity). Modulates the KAT5-dependent glucocorticoid receptor signaling by modulating KAT5 subcellular compartmentalisation (By similarity). Also plays a role in the activation TGFBR1 in the absence of TGFBR2 by interfering with FKBP1A binding to TGFBR1, leading to induction of both canonical and non-canonical SMAD signaling pathways resulting in inhibition of proliferation or promotion of migration (By similarity).</text>
</comment>
<comment type="subunit">
    <text evidence="2">Homodimer, and heterodimer with MTNR1A and MTNR1B. Interacts with KAT5. Interacts with RTN4 isoform A/NOGO-A. Interacts with TGFBR1.</text>
</comment>
<comment type="subcellular location">
    <subcellularLocation>
        <location evidence="2">Cell membrane</location>
        <topology>Multi-pass membrane protein</topology>
    </subcellularLocation>
</comment>
<comment type="similarity">
    <text evidence="4">Belongs to the G-protein coupled receptor 1 family.</text>
</comment>
<dbReference type="EMBL" id="AF047829">
    <property type="protein sequence ID" value="AAC04275.1"/>
    <property type="molecule type" value="mRNA"/>
</dbReference>
<dbReference type="EMBL" id="U52221">
    <property type="protein sequence ID" value="AAC48609.1"/>
    <property type="molecule type" value="mRNA"/>
</dbReference>
<dbReference type="RefSeq" id="NP_001009726.1">
    <property type="nucleotide sequence ID" value="NM_001009726.1"/>
</dbReference>
<dbReference type="SMR" id="Q28558"/>
<dbReference type="STRING" id="9940.ENSOARP00000009392"/>
<dbReference type="PaxDb" id="9940-ENSOARP00000009392"/>
<dbReference type="Ensembl" id="ENSOART00040035361">
    <property type="protein sequence ID" value="ENSOARP00040018329"/>
    <property type="gene ID" value="ENSOARG00040021205"/>
</dbReference>
<dbReference type="Ensembl" id="ENSOART00225076173">
    <property type="protein sequence ID" value="ENSOARP00225039222"/>
    <property type="gene ID" value="ENSOARG00225045823"/>
</dbReference>
<dbReference type="GeneID" id="443023"/>
<dbReference type="KEGG" id="oas:443023"/>
<dbReference type="CTD" id="9248"/>
<dbReference type="eggNOG" id="KOG3656">
    <property type="taxonomic scope" value="Eukaryota"/>
</dbReference>
<dbReference type="OrthoDB" id="10044919at2759"/>
<dbReference type="Proteomes" id="UP000002356">
    <property type="component" value="Unplaced"/>
</dbReference>
<dbReference type="GO" id="GO:0005886">
    <property type="term" value="C:plasma membrane"/>
    <property type="evidence" value="ECO:0007669"/>
    <property type="project" value="UniProtKB-SubCell"/>
</dbReference>
<dbReference type="GO" id="GO:0008502">
    <property type="term" value="F:melatonin receptor activity"/>
    <property type="evidence" value="ECO:0007669"/>
    <property type="project" value="InterPro"/>
</dbReference>
<dbReference type="FunFam" id="1.20.1070.10:FF:000172">
    <property type="entry name" value="G protein-coupled receptor 50"/>
    <property type="match status" value="1"/>
</dbReference>
<dbReference type="Gene3D" id="1.20.1070.10">
    <property type="entry name" value="Rhodopsin 7-helix transmembrane proteins"/>
    <property type="match status" value="1"/>
</dbReference>
<dbReference type="InterPro" id="IPR000276">
    <property type="entry name" value="GPCR_Rhodpsn"/>
</dbReference>
<dbReference type="InterPro" id="IPR017452">
    <property type="entry name" value="GPCR_Rhodpsn_7TM"/>
</dbReference>
<dbReference type="InterPro" id="IPR002280">
    <property type="entry name" value="Mel_rcpt_1X"/>
</dbReference>
<dbReference type="InterPro" id="IPR000025">
    <property type="entry name" value="Melatonin_rcpt"/>
</dbReference>
<dbReference type="PANTHER" id="PTHR24228">
    <property type="entry name" value="B2 BRADYKININ RECEPTOR/ANGIOTENSIN II RECEPTOR"/>
    <property type="match status" value="1"/>
</dbReference>
<dbReference type="PANTHER" id="PTHR24228:SF56">
    <property type="entry name" value="MELATONIN-RELATED RECEPTOR"/>
    <property type="match status" value="1"/>
</dbReference>
<dbReference type="Pfam" id="PF00001">
    <property type="entry name" value="7tm_1"/>
    <property type="match status" value="1"/>
</dbReference>
<dbReference type="PRINTS" id="PR00237">
    <property type="entry name" value="GPCRRHODOPSN"/>
</dbReference>
<dbReference type="PRINTS" id="PR01151">
    <property type="entry name" value="MELATONIN1XR"/>
</dbReference>
<dbReference type="PRINTS" id="PR00857">
    <property type="entry name" value="MELATONINR"/>
</dbReference>
<dbReference type="SMART" id="SM01381">
    <property type="entry name" value="7TM_GPCR_Srsx"/>
    <property type="match status" value="1"/>
</dbReference>
<dbReference type="SUPFAM" id="SSF81321">
    <property type="entry name" value="Family A G protein-coupled receptor-like"/>
    <property type="match status" value="1"/>
</dbReference>
<dbReference type="PROSITE" id="PS00237">
    <property type="entry name" value="G_PROTEIN_RECEP_F1_1"/>
    <property type="match status" value="1"/>
</dbReference>
<dbReference type="PROSITE" id="PS50262">
    <property type="entry name" value="G_PROTEIN_RECEP_F1_2"/>
    <property type="match status" value="1"/>
</dbReference>
<feature type="chain" id="PRO_0000069881" description="Melatonin-related receptor">
    <location>
        <begin position="1"/>
        <end position="575"/>
    </location>
</feature>
<feature type="topological domain" description="Extracellular" evidence="3">
    <location>
        <begin position="1"/>
        <end position="30"/>
    </location>
</feature>
<feature type="transmembrane region" description="Helical; Name=1" evidence="3">
    <location>
        <begin position="31"/>
        <end position="51"/>
    </location>
</feature>
<feature type="topological domain" description="Cytoplasmic" evidence="3">
    <location>
        <begin position="52"/>
        <end position="64"/>
    </location>
</feature>
<feature type="transmembrane region" description="Helical; Name=2" evidence="3">
    <location>
        <begin position="65"/>
        <end position="85"/>
    </location>
</feature>
<feature type="topological domain" description="Extracellular" evidence="3">
    <location>
        <begin position="86"/>
        <end position="103"/>
    </location>
</feature>
<feature type="transmembrane region" description="Helical; Name=3" evidence="3">
    <location>
        <begin position="104"/>
        <end position="124"/>
    </location>
</feature>
<feature type="topological domain" description="Cytoplasmic" evidence="3">
    <location>
        <begin position="125"/>
        <end position="143"/>
    </location>
</feature>
<feature type="transmembrane region" description="Helical; Name=4" evidence="3">
    <location>
        <begin position="144"/>
        <end position="164"/>
    </location>
</feature>
<feature type="topological domain" description="Extracellular" evidence="3">
    <location>
        <begin position="165"/>
        <end position="188"/>
    </location>
</feature>
<feature type="transmembrane region" description="Helical; Name=5" evidence="3">
    <location>
        <begin position="189"/>
        <end position="209"/>
    </location>
</feature>
<feature type="topological domain" description="Cytoplasmic" evidence="3">
    <location>
        <begin position="210"/>
        <end position="239"/>
    </location>
</feature>
<feature type="transmembrane region" description="Helical; Name=6" evidence="3">
    <location>
        <begin position="240"/>
        <end position="260"/>
    </location>
</feature>
<feature type="topological domain" description="Extracellular" evidence="3">
    <location>
        <begin position="261"/>
        <end position="273"/>
    </location>
</feature>
<feature type="transmembrane region" description="Helical; Name=7" evidence="3">
    <location>
        <begin position="274"/>
        <end position="294"/>
    </location>
</feature>
<feature type="topological domain" description="Cytoplasmic" evidence="3">
    <location>
        <begin position="295"/>
        <end position="575"/>
    </location>
</feature>
<feature type="region of interest" description="Disordered" evidence="5">
    <location>
        <begin position="368"/>
        <end position="421"/>
    </location>
</feature>
<feature type="region of interest" description="Disordered" evidence="5">
    <location>
        <begin position="446"/>
        <end position="474"/>
    </location>
</feature>
<feature type="compositionally biased region" description="Polar residues" evidence="5">
    <location>
        <begin position="455"/>
        <end position="474"/>
    </location>
</feature>
<feature type="disulfide bond" evidence="4">
    <location>
        <begin position="101"/>
        <end position="178"/>
    </location>
</feature>
<feature type="sequence conflict" description="In Ref. 2; AAC48609." evidence="6" ref="2">
    <original>R</original>
    <variation>L</variation>
    <location>
        <position position="138"/>
    </location>
</feature>
<feature type="sequence conflict" description="In Ref. 2; AAC48609." evidence="6" ref="2">
    <original>L</original>
    <variation>M</variation>
    <location>
        <position position="158"/>
    </location>
</feature>
<feature type="sequence conflict" description="In Ref. 2; AAC48609." evidence="6" ref="2">
    <location>
        <begin position="218"/>
        <end position="219"/>
    </location>
</feature>
<accession>Q28558</accession>
<accession>O46624</accession>
<organism>
    <name type="scientific">Ovis aries</name>
    <name type="common">Sheep</name>
    <dbReference type="NCBI Taxonomy" id="9940"/>
    <lineage>
        <taxon>Eukaryota</taxon>
        <taxon>Metazoa</taxon>
        <taxon>Chordata</taxon>
        <taxon>Craniata</taxon>
        <taxon>Vertebrata</taxon>
        <taxon>Euteleostomi</taxon>
        <taxon>Mammalia</taxon>
        <taxon>Eutheria</taxon>
        <taxon>Laurasiatheria</taxon>
        <taxon>Artiodactyla</taxon>
        <taxon>Ruminantia</taxon>
        <taxon>Pecora</taxon>
        <taxon>Bovidae</taxon>
        <taxon>Caprinae</taxon>
        <taxon>Ovis</taxon>
    </lineage>
</organism>
<sequence>MGRTLAVPTPYGCIGCKLPQPDYPPALIVFMFCAMVITIVVDLIGNSMVILAVSKNKKLRNSGNVFVVSLSVADMLVAIYPYPLMLHAMAIGGWDLSKLQCQMVGFITGLSVVGSIFNIMAIAINRYCYICHSLQYERIFSVRNTCIYLAVTWIMTVLAVLPNMYIGTIEYDPRTYTCIFNYVNNPAFAVTIVCIHFVLPLLIVGFCYVKIWTKVLAARDPAGQNPDNQLAEVRNFLTMFVIFLLFAVCWCPINALTVLVAVNPKEMAGKIPNWVYLAAYFIAYFNSCLNAVIYGVLNENFRREYWTIFHAMRHPVLFLSGLLTDVREMQEAQAHTHARARARTQAHEQDHAHACPAVEEIPMSVRNVPLPGHGAAGQPECVSGHPKPASGHSRSVSARRKSASAHPKSASGQSKSATVYPKPTSVHFKPSSVYFKADSVYFKPSSSHPKPITGPSKTAISPATSFPKPTTGYTQHATIHSEPTTLDYLEPITTSHSKPVIASHSELAASCHLECNIFDLSDPTSSPASDSSNSAASLLDPTAAAAATVNPTVVTTDYHEIVLIDVDADSDEMAV</sequence>
<gene>
    <name type="primary">GPR50</name>
</gene>
<reference key="1">
    <citation type="journal article" date="1998" name="J. Neuroendocrinol.">
        <title>The ovine melatonin-related receptor: cloning and preliminary distribution and binding studies.</title>
        <authorList>
            <person name="Drew J.E."/>
            <person name="Barrett P."/>
            <person name="Williams L.M."/>
            <person name="Conway S."/>
            <person name="Morgan P.J."/>
        </authorList>
    </citation>
    <scope>NUCLEOTIDE SEQUENCE [MRNA]</scope>
</reference>
<reference key="2">
    <citation type="journal article" date="1996" name="FEBS Lett.">
        <title>Cloning of a melatonin-related receptor from human pituitary.</title>
        <authorList>
            <person name="Reppert S.M."/>
            <person name="Weaver D.R."/>
            <person name="Ebisawa T."/>
            <person name="Mahle C.D."/>
            <person name="Kolakowski L.F. Jr."/>
        </authorList>
    </citation>
    <scope>NUCLEOTIDE SEQUENCE [MRNA] OF 128-245</scope>
</reference>
<name>MTR1L_SHEEP</name>